<comment type="subunit">
    <text>Heterotetramer of two type I and two type II keratins.</text>
</comment>
<comment type="miscellaneous">
    <text>There are two types of cytoskeletal and microfibrillar keratin, I (acidic) and II (neutral to basic) (40-55 and 56-70 kDa, respectively).</text>
</comment>
<comment type="similarity">
    <text evidence="2">Belongs to the intermediate filament family.</text>
</comment>
<evidence type="ECO:0000250" key="1">
    <source>
        <dbReference type="UniProtKB" id="Q6KB66"/>
    </source>
</evidence>
<evidence type="ECO:0000255" key="2">
    <source>
        <dbReference type="PROSITE-ProRule" id="PRU01188"/>
    </source>
</evidence>
<accession>A0JND2</accession>
<feature type="chain" id="PRO_0000314895" description="Keratin, type II cytoskeletal 80">
    <location>
        <begin position="1"/>
        <end position="422"/>
    </location>
</feature>
<feature type="domain" description="IF rod" evidence="2">
    <location>
        <begin position="83"/>
        <end position="394"/>
    </location>
</feature>
<feature type="region of interest" description="Head">
    <location>
        <begin position="1"/>
        <end position="82"/>
    </location>
</feature>
<feature type="region of interest" description="Coil 1A">
    <location>
        <begin position="83"/>
        <end position="118"/>
    </location>
</feature>
<feature type="region of interest" description="Linker 1">
    <location>
        <begin position="119"/>
        <end position="135"/>
    </location>
</feature>
<feature type="region of interest" description="Coil 1B">
    <location>
        <begin position="136"/>
        <end position="227"/>
    </location>
</feature>
<feature type="region of interest" description="Linker 12">
    <location>
        <begin position="228"/>
        <end position="251"/>
    </location>
</feature>
<feature type="region of interest" description="Coil 2">
    <location>
        <begin position="252"/>
        <end position="390"/>
    </location>
</feature>
<feature type="region of interest" description="Tail">
    <location>
        <begin position="391"/>
        <end position="422"/>
    </location>
</feature>
<feature type="site" description="Stutter">
    <location>
        <position position="334"/>
    </location>
</feature>
<feature type="modified residue" description="Phosphoserine" evidence="1">
    <location>
        <position position="45"/>
    </location>
</feature>
<sequence>MACRSCVVGFSSLSSCEVTPAGSPRPATAGWSSCGPPEPGLSSHSLTGCWTAGTVSKVTVNPSLLVPLDLKVDPAIQQQKNNEKEEMKVLNDKFASLIGKVQALEQRNQLLETRWHFLQSQDSATFDLGHLYEEYQGRLQEELRKVSKERGQLEANLLQVLEKVEDFRIRYEDEISKRTDMEFTFVQLKKDLDAECLRRTELETKLKGLQSFVELMKSIYEQELKDLAAQLKDVSVTVGMDSRCHIDLSGIVEEVKAQYDAVAARSLEEAEAYSRSQLEERAACSAEFENSLQSSRSEIADLNVRIQKLRSQILSIKSHCLKLEENIKVAEEQGELAFQDAKAKLAQLEDALQQAKKDMARQLREYQELMNTKLALDIEIATYRKLMEGEESRMDMPSATVVSAVQARCRTAPTLPHPLCSL</sequence>
<gene>
    <name type="primary">KRT80</name>
</gene>
<dbReference type="EMBL" id="BC126624">
    <property type="protein sequence ID" value="AAI26625.1"/>
    <property type="molecule type" value="mRNA"/>
</dbReference>
<dbReference type="EMBL" id="BC147909">
    <property type="protein sequence ID" value="AAI47910.1"/>
    <property type="molecule type" value="mRNA"/>
</dbReference>
<dbReference type="RefSeq" id="NP_001071420.1">
    <property type="nucleotide sequence ID" value="NM_001077952.1"/>
</dbReference>
<dbReference type="SMR" id="A0JND2"/>
<dbReference type="FunCoup" id="A0JND2">
    <property type="interactions" value="20"/>
</dbReference>
<dbReference type="STRING" id="9913.ENSBTAP00000064848"/>
<dbReference type="PaxDb" id="9913-ENSBTAP00000007288"/>
<dbReference type="Ensembl" id="ENSBTAT00000007288.6">
    <property type="protein sequence ID" value="ENSBTAP00000007288.4"/>
    <property type="gene ID" value="ENSBTAG00000007204.7"/>
</dbReference>
<dbReference type="GeneID" id="522400"/>
<dbReference type="KEGG" id="bta:522400"/>
<dbReference type="CTD" id="144501"/>
<dbReference type="VEuPathDB" id="HostDB:ENSBTAG00000007204"/>
<dbReference type="VGNC" id="VGNC:30742">
    <property type="gene designation" value="KRT80"/>
</dbReference>
<dbReference type="eggNOG" id="ENOG502RVYD">
    <property type="taxonomic scope" value="Eukaryota"/>
</dbReference>
<dbReference type="GeneTree" id="ENSGT00940000161279"/>
<dbReference type="HOGENOM" id="CLU_012560_5_4_1"/>
<dbReference type="InParanoid" id="A0JND2"/>
<dbReference type="OrthoDB" id="2441647at2759"/>
<dbReference type="TreeFam" id="TF317854"/>
<dbReference type="Reactome" id="R-BTA-6805567">
    <property type="pathway name" value="Keratinization"/>
</dbReference>
<dbReference type="Reactome" id="R-BTA-6809371">
    <property type="pathway name" value="Formation of the cornified envelope"/>
</dbReference>
<dbReference type="Proteomes" id="UP000009136">
    <property type="component" value="Chromosome 5"/>
</dbReference>
<dbReference type="Bgee" id="ENSBTAG00000007204">
    <property type="expression patterns" value="Expressed in zone of skin and 89 other cell types or tissues"/>
</dbReference>
<dbReference type="GO" id="GO:0045095">
    <property type="term" value="C:keratin filament"/>
    <property type="evidence" value="ECO:0000318"/>
    <property type="project" value="GO_Central"/>
</dbReference>
<dbReference type="GO" id="GO:0030280">
    <property type="term" value="F:structural constituent of skin epidermis"/>
    <property type="evidence" value="ECO:0000318"/>
    <property type="project" value="GO_Central"/>
</dbReference>
<dbReference type="GO" id="GO:0045109">
    <property type="term" value="P:intermediate filament organization"/>
    <property type="evidence" value="ECO:0000318"/>
    <property type="project" value="GO_Central"/>
</dbReference>
<dbReference type="GO" id="GO:0031424">
    <property type="term" value="P:keratinization"/>
    <property type="evidence" value="ECO:0000318"/>
    <property type="project" value="GO_Central"/>
</dbReference>
<dbReference type="FunFam" id="1.20.5.1160:FF:000001">
    <property type="entry name" value="Keratin type II"/>
    <property type="match status" value="1"/>
</dbReference>
<dbReference type="FunFam" id="1.20.5.170:FF:000004">
    <property type="entry name" value="Keratin, type II cytoskeletal 5"/>
    <property type="match status" value="1"/>
</dbReference>
<dbReference type="Gene3D" id="1.20.5.170">
    <property type="match status" value="1"/>
</dbReference>
<dbReference type="Gene3D" id="1.20.5.500">
    <property type="entry name" value="Single helix bin"/>
    <property type="match status" value="1"/>
</dbReference>
<dbReference type="Gene3D" id="1.20.5.1160">
    <property type="entry name" value="Vasodilator-stimulated phosphoprotein"/>
    <property type="match status" value="1"/>
</dbReference>
<dbReference type="InterPro" id="IPR039008">
    <property type="entry name" value="IF_rod_dom"/>
</dbReference>
<dbReference type="InterPro" id="IPR032444">
    <property type="entry name" value="Keratin_2_head"/>
</dbReference>
<dbReference type="InterPro" id="IPR003054">
    <property type="entry name" value="Keratin_II"/>
</dbReference>
<dbReference type="PANTHER" id="PTHR45616">
    <property type="entry name" value="GATA-TYPE DOMAIN-CONTAINING PROTEIN"/>
    <property type="match status" value="1"/>
</dbReference>
<dbReference type="PANTHER" id="PTHR45616:SF1">
    <property type="entry name" value="KERATIN, TYPE II CYTOSKELETAL 80"/>
    <property type="match status" value="1"/>
</dbReference>
<dbReference type="Pfam" id="PF00038">
    <property type="entry name" value="Filament"/>
    <property type="match status" value="1"/>
</dbReference>
<dbReference type="Pfam" id="PF16208">
    <property type="entry name" value="Keratin_2_head"/>
    <property type="match status" value="1"/>
</dbReference>
<dbReference type="PRINTS" id="PR01276">
    <property type="entry name" value="TYPE2KERATIN"/>
</dbReference>
<dbReference type="SMART" id="SM01391">
    <property type="entry name" value="Filament"/>
    <property type="match status" value="1"/>
</dbReference>
<dbReference type="SUPFAM" id="SSF64593">
    <property type="entry name" value="Intermediate filament protein, coiled coil region"/>
    <property type="match status" value="2"/>
</dbReference>
<dbReference type="PROSITE" id="PS51842">
    <property type="entry name" value="IF_ROD_2"/>
    <property type="match status" value="1"/>
</dbReference>
<reference key="1">
    <citation type="submission" date="2006-10" db="EMBL/GenBank/DDBJ databases">
        <authorList>
            <consortium name="NIH - Mammalian Gene Collection (MGC) project"/>
        </authorList>
    </citation>
    <scope>NUCLEOTIDE SEQUENCE [LARGE SCALE MRNA]</scope>
    <source>
        <strain>Hereford</strain>
        <tissue>Fetal skin</tissue>
    </source>
</reference>
<name>K2C80_BOVIN</name>
<proteinExistence type="evidence at transcript level"/>
<organism>
    <name type="scientific">Bos taurus</name>
    <name type="common">Bovine</name>
    <dbReference type="NCBI Taxonomy" id="9913"/>
    <lineage>
        <taxon>Eukaryota</taxon>
        <taxon>Metazoa</taxon>
        <taxon>Chordata</taxon>
        <taxon>Craniata</taxon>
        <taxon>Vertebrata</taxon>
        <taxon>Euteleostomi</taxon>
        <taxon>Mammalia</taxon>
        <taxon>Eutheria</taxon>
        <taxon>Laurasiatheria</taxon>
        <taxon>Artiodactyla</taxon>
        <taxon>Ruminantia</taxon>
        <taxon>Pecora</taxon>
        <taxon>Bovidae</taxon>
        <taxon>Bovinae</taxon>
        <taxon>Bos</taxon>
    </lineage>
</organism>
<protein>
    <recommendedName>
        <fullName>Keratin, type II cytoskeletal 80</fullName>
    </recommendedName>
    <alternativeName>
        <fullName>Cytokeratin-80</fullName>
        <shortName>CK-80</shortName>
    </alternativeName>
    <alternativeName>
        <fullName>Keratin-80</fullName>
        <shortName>K80</shortName>
    </alternativeName>
    <alternativeName>
        <fullName>Type-II keratin Kb20</fullName>
    </alternativeName>
</protein>
<keyword id="KW-0175">Coiled coil</keyword>
<keyword id="KW-0403">Intermediate filament</keyword>
<keyword id="KW-0416">Keratin</keyword>
<keyword id="KW-0597">Phosphoprotein</keyword>
<keyword id="KW-1185">Reference proteome</keyword>